<comment type="similarity">
    <text evidence="1">Belongs to the UPF0735 family.</text>
</comment>
<dbReference type="EMBL" id="M24537">
    <property type="protein sequence ID" value="AAA22506.1"/>
    <property type="molecule type" value="Genomic_DNA"/>
</dbReference>
<dbReference type="EMBL" id="AL009126">
    <property type="protein sequence ID" value="CAB14751.1"/>
    <property type="molecule type" value="Genomic_DNA"/>
</dbReference>
<dbReference type="PIR" id="D32804">
    <property type="entry name" value="D32804"/>
</dbReference>
<dbReference type="FunCoup" id="P21204">
    <property type="interactions" value="132"/>
</dbReference>
<dbReference type="STRING" id="224308.BSU27910"/>
<dbReference type="PaxDb" id="224308-BSU27910"/>
<dbReference type="DNASU" id="938171"/>
<dbReference type="EnsemblBacteria" id="CAB14751">
    <property type="protein sequence ID" value="CAB14751"/>
    <property type="gene ID" value="BSU_27910"/>
</dbReference>
<dbReference type="GeneID" id="938171"/>
<dbReference type="KEGG" id="bsu:BSU27910"/>
<dbReference type="PATRIC" id="fig|224308.179.peg.3032"/>
<dbReference type="eggNOG" id="COG4492">
    <property type="taxonomic scope" value="Bacteria"/>
</dbReference>
<dbReference type="InParanoid" id="P21204"/>
<dbReference type="OrthoDB" id="9788773at2"/>
<dbReference type="BioCyc" id="BSUB:BSU27910-MONOMER"/>
<dbReference type="PRO" id="PR:P21204"/>
<dbReference type="Proteomes" id="UP000001570">
    <property type="component" value="Chromosome"/>
</dbReference>
<dbReference type="CDD" id="cd04888">
    <property type="entry name" value="ACT_PheB-BS"/>
    <property type="match status" value="1"/>
</dbReference>
<dbReference type="Gene3D" id="3.30.70.260">
    <property type="match status" value="1"/>
</dbReference>
<dbReference type="HAMAP" id="MF_00707">
    <property type="entry name" value="UPF0735"/>
    <property type="match status" value="1"/>
</dbReference>
<dbReference type="InterPro" id="IPR045865">
    <property type="entry name" value="ACT-like_dom_sf"/>
</dbReference>
<dbReference type="InterPro" id="IPR002912">
    <property type="entry name" value="ACT_dom"/>
</dbReference>
<dbReference type="InterPro" id="IPR008310">
    <property type="entry name" value="UPF0735_ACT_dom-cont"/>
</dbReference>
<dbReference type="NCBIfam" id="NF003361">
    <property type="entry name" value="PRK04435.1"/>
    <property type="match status" value="1"/>
</dbReference>
<dbReference type="Pfam" id="PF01842">
    <property type="entry name" value="ACT"/>
    <property type="match status" value="1"/>
</dbReference>
<dbReference type="PIRSF" id="PIRSF025624">
    <property type="entry name" value="ACT_PheB"/>
    <property type="match status" value="1"/>
</dbReference>
<dbReference type="SUPFAM" id="SSF55021">
    <property type="entry name" value="ACT-like"/>
    <property type="match status" value="1"/>
</dbReference>
<dbReference type="PROSITE" id="PS51671">
    <property type="entry name" value="ACT"/>
    <property type="match status" value="1"/>
</dbReference>
<protein>
    <recommendedName>
        <fullName evidence="1">UPF0735 ACT domain-containing protein YszB</fullName>
    </recommendedName>
</protein>
<proteinExistence type="inferred from homology"/>
<sequence>MKEETFYLVREDVLPDAMRKTLEVKKLLDRKKADSVADAVQKVDLSRSAFYKYRDAVFPFYTMVKEQIITLFFHLEDRSGALSQLLQAVADSGSNVLSIHQTIPLQGRANVTLSISTSAMEEDIHTLMNKLRKFDFVEKVEILGSGA</sequence>
<name>YSZB_BACSU</name>
<reference key="1">
    <citation type="journal article" date="1989" name="J. Bacteriol.">
        <title>The Bacillus subtilis spo0B stage 0 sporulation operon encodes an essential GTP-binding protein.</title>
        <authorList>
            <person name="Trach K."/>
            <person name="Hoch J.A."/>
        </authorList>
    </citation>
    <scope>NUCLEOTIDE SEQUENCE [GENOMIC DNA]</scope>
</reference>
<reference key="2">
    <citation type="journal article" date="1997" name="Nature">
        <title>The complete genome sequence of the Gram-positive bacterium Bacillus subtilis.</title>
        <authorList>
            <person name="Kunst F."/>
            <person name="Ogasawara N."/>
            <person name="Moszer I."/>
            <person name="Albertini A.M."/>
            <person name="Alloni G."/>
            <person name="Azevedo V."/>
            <person name="Bertero M.G."/>
            <person name="Bessieres P."/>
            <person name="Bolotin A."/>
            <person name="Borchert S."/>
            <person name="Borriss R."/>
            <person name="Boursier L."/>
            <person name="Brans A."/>
            <person name="Braun M."/>
            <person name="Brignell S.C."/>
            <person name="Bron S."/>
            <person name="Brouillet S."/>
            <person name="Bruschi C.V."/>
            <person name="Caldwell B."/>
            <person name="Capuano V."/>
            <person name="Carter N.M."/>
            <person name="Choi S.-K."/>
            <person name="Codani J.-J."/>
            <person name="Connerton I.F."/>
            <person name="Cummings N.J."/>
            <person name="Daniel R.A."/>
            <person name="Denizot F."/>
            <person name="Devine K.M."/>
            <person name="Duesterhoeft A."/>
            <person name="Ehrlich S.D."/>
            <person name="Emmerson P.T."/>
            <person name="Entian K.-D."/>
            <person name="Errington J."/>
            <person name="Fabret C."/>
            <person name="Ferrari E."/>
            <person name="Foulger D."/>
            <person name="Fritz C."/>
            <person name="Fujita M."/>
            <person name="Fujita Y."/>
            <person name="Fuma S."/>
            <person name="Galizzi A."/>
            <person name="Galleron N."/>
            <person name="Ghim S.-Y."/>
            <person name="Glaser P."/>
            <person name="Goffeau A."/>
            <person name="Golightly E.J."/>
            <person name="Grandi G."/>
            <person name="Guiseppi G."/>
            <person name="Guy B.J."/>
            <person name="Haga K."/>
            <person name="Haiech J."/>
            <person name="Harwood C.R."/>
            <person name="Henaut A."/>
            <person name="Hilbert H."/>
            <person name="Holsappel S."/>
            <person name="Hosono S."/>
            <person name="Hullo M.-F."/>
            <person name="Itaya M."/>
            <person name="Jones L.-M."/>
            <person name="Joris B."/>
            <person name="Karamata D."/>
            <person name="Kasahara Y."/>
            <person name="Klaerr-Blanchard M."/>
            <person name="Klein C."/>
            <person name="Kobayashi Y."/>
            <person name="Koetter P."/>
            <person name="Koningstein G."/>
            <person name="Krogh S."/>
            <person name="Kumano M."/>
            <person name="Kurita K."/>
            <person name="Lapidus A."/>
            <person name="Lardinois S."/>
            <person name="Lauber J."/>
            <person name="Lazarevic V."/>
            <person name="Lee S.-M."/>
            <person name="Levine A."/>
            <person name="Liu H."/>
            <person name="Masuda S."/>
            <person name="Mauel C."/>
            <person name="Medigue C."/>
            <person name="Medina N."/>
            <person name="Mellado R.P."/>
            <person name="Mizuno M."/>
            <person name="Moestl D."/>
            <person name="Nakai S."/>
            <person name="Noback M."/>
            <person name="Noone D."/>
            <person name="O'Reilly M."/>
            <person name="Ogawa K."/>
            <person name="Ogiwara A."/>
            <person name="Oudega B."/>
            <person name="Park S.-H."/>
            <person name="Parro V."/>
            <person name="Pohl T.M."/>
            <person name="Portetelle D."/>
            <person name="Porwollik S."/>
            <person name="Prescott A.M."/>
            <person name="Presecan E."/>
            <person name="Pujic P."/>
            <person name="Purnelle B."/>
            <person name="Rapoport G."/>
            <person name="Rey M."/>
            <person name="Reynolds S."/>
            <person name="Rieger M."/>
            <person name="Rivolta C."/>
            <person name="Rocha E."/>
            <person name="Roche B."/>
            <person name="Rose M."/>
            <person name="Sadaie Y."/>
            <person name="Sato T."/>
            <person name="Scanlan E."/>
            <person name="Schleich S."/>
            <person name="Schroeter R."/>
            <person name="Scoffone F."/>
            <person name="Sekiguchi J."/>
            <person name="Sekowska A."/>
            <person name="Seror S.J."/>
            <person name="Serror P."/>
            <person name="Shin B.-S."/>
            <person name="Soldo B."/>
            <person name="Sorokin A."/>
            <person name="Tacconi E."/>
            <person name="Takagi T."/>
            <person name="Takahashi H."/>
            <person name="Takemaru K."/>
            <person name="Takeuchi M."/>
            <person name="Tamakoshi A."/>
            <person name="Tanaka T."/>
            <person name="Terpstra P."/>
            <person name="Tognoni A."/>
            <person name="Tosato V."/>
            <person name="Uchiyama S."/>
            <person name="Vandenbol M."/>
            <person name="Vannier F."/>
            <person name="Vassarotti A."/>
            <person name="Viari A."/>
            <person name="Wambutt R."/>
            <person name="Wedler E."/>
            <person name="Wedler H."/>
            <person name="Weitzenegger T."/>
            <person name="Winters P."/>
            <person name="Wipat A."/>
            <person name="Yamamoto H."/>
            <person name="Yamane K."/>
            <person name="Yasumoto K."/>
            <person name="Yata K."/>
            <person name="Yoshida K."/>
            <person name="Yoshikawa H.-F."/>
            <person name="Zumstein E."/>
            <person name="Yoshikawa H."/>
            <person name="Danchin A."/>
        </authorList>
    </citation>
    <scope>NUCLEOTIDE SEQUENCE [LARGE SCALE GENOMIC DNA]</scope>
    <source>
        <strain>168</strain>
    </source>
</reference>
<accession>P21204</accession>
<organism>
    <name type="scientific">Bacillus subtilis (strain 168)</name>
    <dbReference type="NCBI Taxonomy" id="224308"/>
    <lineage>
        <taxon>Bacteria</taxon>
        <taxon>Bacillati</taxon>
        <taxon>Bacillota</taxon>
        <taxon>Bacilli</taxon>
        <taxon>Bacillales</taxon>
        <taxon>Bacillaceae</taxon>
        <taxon>Bacillus</taxon>
    </lineage>
</organism>
<evidence type="ECO:0000255" key="1">
    <source>
        <dbReference type="HAMAP-Rule" id="MF_00707"/>
    </source>
</evidence>
<gene>
    <name type="primary">yszB</name>
    <name type="synonym">pheB</name>
    <name type="ordered locus">BSU27910</name>
</gene>
<feature type="chain" id="PRO_0000206468" description="UPF0735 ACT domain-containing protein YszB">
    <location>
        <begin position="1"/>
        <end position="147"/>
    </location>
</feature>
<feature type="domain" description="ACT" evidence="1">
    <location>
        <begin position="70"/>
        <end position="145"/>
    </location>
</feature>
<keyword id="KW-1185">Reference proteome</keyword>